<protein>
    <recommendedName>
        <fullName evidence="1">Peroxiredoxin 1</fullName>
        <ecNumber evidence="1">1.11.1.24</ecNumber>
    </recommendedName>
    <alternativeName>
        <fullName evidence="1">Thioredoxin-dependent peroxiredoxin 1</fullName>
    </alternativeName>
</protein>
<comment type="function">
    <text evidence="1">Thiol-specific peroxidase that catalyzes the reduction of hydrogen peroxide and organic hydroperoxides to water and alcohols, respectively. Plays a role in cell protection against oxidative stress by detoxifying peroxides.</text>
</comment>
<comment type="catalytic activity">
    <reaction evidence="1">
        <text>a hydroperoxide + [thioredoxin]-dithiol = an alcohol + [thioredoxin]-disulfide + H2O</text>
        <dbReference type="Rhea" id="RHEA:62620"/>
        <dbReference type="Rhea" id="RHEA-COMP:10698"/>
        <dbReference type="Rhea" id="RHEA-COMP:10700"/>
        <dbReference type="ChEBI" id="CHEBI:15377"/>
        <dbReference type="ChEBI" id="CHEBI:29950"/>
        <dbReference type="ChEBI" id="CHEBI:30879"/>
        <dbReference type="ChEBI" id="CHEBI:35924"/>
        <dbReference type="ChEBI" id="CHEBI:50058"/>
        <dbReference type="EC" id="1.11.1.24"/>
    </reaction>
</comment>
<comment type="subunit">
    <text evidence="1">Homodecamer. Pentamer of dimers that assemble into a ring structure.</text>
</comment>
<comment type="subcellular location">
    <subcellularLocation>
        <location evidence="1">Cytoplasm</location>
    </subcellularLocation>
</comment>
<comment type="miscellaneous">
    <text evidence="1">The active site is a conserved redox-active cysteine residue, the peroxidatic cysteine (C(P)), which makes the nucleophilic attack on the peroxide substrate. The peroxide oxidizes the C(P)-SH to cysteine sulfenic acid (C(P)-SOH), which then reacts with another cysteine residue, the resolving cysteine (C(R)), to form a disulfide bridge. The disulfide is subsequently reduced by an appropriate electron donor to complete the catalytic cycle. In this 1-Cys peroxiredoxin, no C(R) is present and C(P) instead forms a disulfide with a cysteine from another protein or with a small thiol molecule.</text>
</comment>
<comment type="similarity">
    <text evidence="1">Belongs to the peroxiredoxin family. Prx6 subfamily.</text>
</comment>
<evidence type="ECO:0000255" key="1">
    <source>
        <dbReference type="HAMAP-Rule" id="MF_00401"/>
    </source>
</evidence>
<gene>
    <name type="ordered locus">PTO0377</name>
</gene>
<keyword id="KW-0049">Antioxidant</keyword>
<keyword id="KW-0963">Cytoplasm</keyword>
<keyword id="KW-0560">Oxidoreductase</keyword>
<keyword id="KW-0575">Peroxidase</keyword>
<keyword id="KW-0676">Redox-active center</keyword>
<feature type="chain" id="PRO_0000135161" description="Peroxiredoxin 1">
    <location>
        <begin position="1"/>
        <end position="227"/>
    </location>
</feature>
<feature type="domain" description="Thioredoxin" evidence="1">
    <location>
        <begin position="6"/>
        <end position="161"/>
    </location>
</feature>
<feature type="active site" description="Cysteine sulfenic acid (-SOH) intermediate" evidence="1">
    <location>
        <position position="48"/>
    </location>
</feature>
<feature type="binding site" evidence="1">
    <location>
        <position position="124"/>
    </location>
    <ligand>
        <name>substrate</name>
    </ligand>
</feature>
<proteinExistence type="inferred from homology"/>
<reference key="1">
    <citation type="journal article" date="2004" name="Proc. Natl. Acad. Sci. U.S.A.">
        <title>Genome sequence of Picrophilus torridus and its implications for life around pH 0.</title>
        <authorList>
            <person name="Fuetterer O."/>
            <person name="Angelov A."/>
            <person name="Liesegang H."/>
            <person name="Gottschalk G."/>
            <person name="Schleper C."/>
            <person name="Schepers B."/>
            <person name="Dock C."/>
            <person name="Antranikian G."/>
            <person name="Liebl W."/>
        </authorList>
    </citation>
    <scope>NUCLEOTIDE SEQUENCE [LARGE SCALE GENOMIC DNA]</scope>
    <source>
        <strain>ATCC 700027 / DSM 9790 / JCM 10055 / NBRC 100828 / KAW 2/3</strain>
    </source>
</reference>
<organism>
    <name type="scientific">Picrophilus torridus (strain ATCC 700027 / DSM 9790 / JCM 10055 / NBRC 100828 / KAW 2/3)</name>
    <dbReference type="NCBI Taxonomy" id="1122961"/>
    <lineage>
        <taxon>Archaea</taxon>
        <taxon>Methanobacteriati</taxon>
        <taxon>Thermoplasmatota</taxon>
        <taxon>Thermoplasmata</taxon>
        <taxon>Thermoplasmatales</taxon>
        <taxon>Picrophilaceae</taxon>
        <taxon>Picrophilus</taxon>
    </lineage>
</organism>
<accession>Q6L240</accession>
<name>TDXH1_PICTO</name>
<sequence length="227" mass="25988">MEGKMPLIGEKFPEMEVVTNLGNIKLPDDFKGKWFVLFSHPGDFTPVCTTEFFSFAKHHDDFKKLNTELIGLSVDSKISHIEWINWIKQNLKIDIKFPIIADPMGHVATKLGMIQAQSATQTVRAVFIVDDRSTIRAILYYPMETGRNISEILRLIKSLQMVDKYKIVTPANWPNNEIIGDNVLNPPPATQNDIEERTKKYKGYAWWLTYQDANKADVDEAKEITGE</sequence>
<dbReference type="EC" id="1.11.1.24" evidence="1"/>
<dbReference type="EMBL" id="AE017261">
    <property type="protein sequence ID" value="AAT42962.1"/>
    <property type="molecule type" value="Genomic_DNA"/>
</dbReference>
<dbReference type="SMR" id="Q6L240"/>
<dbReference type="FunCoup" id="Q6L240">
    <property type="interactions" value="40"/>
</dbReference>
<dbReference type="STRING" id="263820.PTO0377"/>
<dbReference type="PaxDb" id="263820-PTO0377"/>
<dbReference type="KEGG" id="pto:PTO0377"/>
<dbReference type="eggNOG" id="arCOG00312">
    <property type="taxonomic scope" value="Archaea"/>
</dbReference>
<dbReference type="HOGENOM" id="CLU_042529_4_4_2"/>
<dbReference type="InParanoid" id="Q6L240"/>
<dbReference type="OrthoDB" id="6924at2157"/>
<dbReference type="Proteomes" id="UP000000438">
    <property type="component" value="Chromosome"/>
</dbReference>
<dbReference type="GO" id="GO:0005829">
    <property type="term" value="C:cytosol"/>
    <property type="evidence" value="ECO:0007669"/>
    <property type="project" value="TreeGrafter"/>
</dbReference>
<dbReference type="GO" id="GO:0008379">
    <property type="term" value="F:thioredoxin peroxidase activity"/>
    <property type="evidence" value="ECO:0007669"/>
    <property type="project" value="TreeGrafter"/>
</dbReference>
<dbReference type="GO" id="GO:0045454">
    <property type="term" value="P:cell redox homeostasis"/>
    <property type="evidence" value="ECO:0007669"/>
    <property type="project" value="TreeGrafter"/>
</dbReference>
<dbReference type="GO" id="GO:0033554">
    <property type="term" value="P:cellular response to stress"/>
    <property type="evidence" value="ECO:0007669"/>
    <property type="project" value="TreeGrafter"/>
</dbReference>
<dbReference type="GO" id="GO:0042744">
    <property type="term" value="P:hydrogen peroxide catabolic process"/>
    <property type="evidence" value="ECO:0007669"/>
    <property type="project" value="TreeGrafter"/>
</dbReference>
<dbReference type="GO" id="GO:0006979">
    <property type="term" value="P:response to oxidative stress"/>
    <property type="evidence" value="ECO:0007669"/>
    <property type="project" value="TreeGrafter"/>
</dbReference>
<dbReference type="CDD" id="cd03016">
    <property type="entry name" value="PRX_1cys"/>
    <property type="match status" value="1"/>
</dbReference>
<dbReference type="FunFam" id="3.40.30.10:FF:000011">
    <property type="entry name" value="Peroxiredoxin PRX1"/>
    <property type="match status" value="1"/>
</dbReference>
<dbReference type="Gene3D" id="3.30.1020.10">
    <property type="entry name" value="Antioxidant, Horf6, Chain A, domain2"/>
    <property type="match status" value="1"/>
</dbReference>
<dbReference type="Gene3D" id="3.40.30.10">
    <property type="entry name" value="Glutaredoxin"/>
    <property type="match status" value="1"/>
</dbReference>
<dbReference type="HAMAP" id="MF_00401">
    <property type="entry name" value="Peroxiredoxin"/>
    <property type="match status" value="1"/>
</dbReference>
<dbReference type="InterPro" id="IPR000866">
    <property type="entry name" value="AhpC/TSA"/>
</dbReference>
<dbReference type="InterPro" id="IPR050217">
    <property type="entry name" value="Peroxiredoxin"/>
</dbReference>
<dbReference type="InterPro" id="IPR024706">
    <property type="entry name" value="Peroxiredoxin_AhpC-typ"/>
</dbReference>
<dbReference type="InterPro" id="IPR019479">
    <property type="entry name" value="Peroxiredoxin_C"/>
</dbReference>
<dbReference type="InterPro" id="IPR022915">
    <property type="entry name" value="Peroxiredoxin_TDXH"/>
</dbReference>
<dbReference type="InterPro" id="IPR045020">
    <property type="entry name" value="PRX_1cys"/>
</dbReference>
<dbReference type="InterPro" id="IPR036249">
    <property type="entry name" value="Thioredoxin-like_sf"/>
</dbReference>
<dbReference type="InterPro" id="IPR013766">
    <property type="entry name" value="Thioredoxin_domain"/>
</dbReference>
<dbReference type="NCBIfam" id="NF009668">
    <property type="entry name" value="PRK13189.1"/>
    <property type="match status" value="1"/>
</dbReference>
<dbReference type="NCBIfam" id="NF009670">
    <property type="entry name" value="PRK13191.1"/>
    <property type="match status" value="1"/>
</dbReference>
<dbReference type="PANTHER" id="PTHR10681:SF121">
    <property type="entry name" value="ALKYL HYDROPEROXIDE REDUCTASE C"/>
    <property type="match status" value="1"/>
</dbReference>
<dbReference type="PANTHER" id="PTHR10681">
    <property type="entry name" value="THIOREDOXIN PEROXIDASE"/>
    <property type="match status" value="1"/>
</dbReference>
<dbReference type="Pfam" id="PF10417">
    <property type="entry name" value="1-cysPrx_C"/>
    <property type="match status" value="1"/>
</dbReference>
<dbReference type="Pfam" id="PF00578">
    <property type="entry name" value="AhpC-TSA"/>
    <property type="match status" value="1"/>
</dbReference>
<dbReference type="PIRSF" id="PIRSF000239">
    <property type="entry name" value="AHPC"/>
    <property type="match status" value="1"/>
</dbReference>
<dbReference type="SUPFAM" id="SSF52833">
    <property type="entry name" value="Thioredoxin-like"/>
    <property type="match status" value="1"/>
</dbReference>
<dbReference type="PROSITE" id="PS51352">
    <property type="entry name" value="THIOREDOXIN_2"/>
    <property type="match status" value="1"/>
</dbReference>